<dbReference type="EMBL" id="AY147883">
    <property type="protein sequence ID" value="AAN63055.1"/>
    <property type="molecule type" value="mRNA"/>
</dbReference>
<dbReference type="RefSeq" id="NP_001009761.1">
    <property type="nucleotide sequence ID" value="NM_001009761.1"/>
</dbReference>
<dbReference type="STRING" id="9940.ENSOARP00000016286"/>
<dbReference type="GlyCosmos" id="Q8HYZ0">
    <property type="glycosylation" value="1 site, No reported glycans"/>
</dbReference>
<dbReference type="PaxDb" id="9940-ENSOARP00000016286"/>
<dbReference type="Ensembl" id="ENSOART00180024300">
    <property type="protein sequence ID" value="ENSOARP00180012674"/>
    <property type="gene ID" value="ENSOARG00180014718"/>
</dbReference>
<dbReference type="Ensembl" id="ENSOART00185031796">
    <property type="protein sequence ID" value="ENSOARP00185015477"/>
    <property type="gene ID" value="ENSOARG00185019449"/>
</dbReference>
<dbReference type="Ensembl" id="ENSOART00215024203">
    <property type="protein sequence ID" value="ENSOARP00215012343"/>
    <property type="gene ID" value="ENSOARG00215014580"/>
</dbReference>
<dbReference type="Ensembl" id="ENSOART00220039454">
    <property type="protein sequence ID" value="ENSOARP00220021362"/>
    <property type="gene ID" value="ENSOARG00220023726"/>
</dbReference>
<dbReference type="Ensembl" id="ENSOART00225060021">
    <property type="protein sequence ID" value="ENSOARP00225030182"/>
    <property type="gene ID" value="ENSOARG00225036255"/>
</dbReference>
<dbReference type="GeneID" id="443242"/>
<dbReference type="KEGG" id="oas:443242"/>
<dbReference type="CTD" id="25805"/>
<dbReference type="eggNOG" id="ENOG502QXJJ">
    <property type="taxonomic scope" value="Eukaryota"/>
</dbReference>
<dbReference type="OrthoDB" id="5914644at2759"/>
<dbReference type="Proteomes" id="UP000002356">
    <property type="component" value="Unplaced"/>
</dbReference>
<dbReference type="GO" id="GO:0005737">
    <property type="term" value="C:cytoplasm"/>
    <property type="evidence" value="ECO:0007669"/>
    <property type="project" value="Ensembl"/>
</dbReference>
<dbReference type="GO" id="GO:0005886">
    <property type="term" value="C:plasma membrane"/>
    <property type="evidence" value="ECO:0007669"/>
    <property type="project" value="Ensembl"/>
</dbReference>
<dbReference type="GO" id="GO:0005109">
    <property type="term" value="F:frizzled binding"/>
    <property type="evidence" value="ECO:0007669"/>
    <property type="project" value="Ensembl"/>
</dbReference>
<dbReference type="GO" id="GO:0016477">
    <property type="term" value="P:cell migration"/>
    <property type="evidence" value="ECO:0007669"/>
    <property type="project" value="Ensembl"/>
</dbReference>
<dbReference type="GO" id="GO:0030514">
    <property type="term" value="P:negative regulation of BMP signaling pathway"/>
    <property type="evidence" value="ECO:0007669"/>
    <property type="project" value="Ensembl"/>
</dbReference>
<dbReference type="GO" id="GO:0045668">
    <property type="term" value="P:negative regulation of osteoblast differentiation"/>
    <property type="evidence" value="ECO:0007669"/>
    <property type="project" value="Ensembl"/>
</dbReference>
<dbReference type="GO" id="GO:0030512">
    <property type="term" value="P:negative regulation of transforming growth factor beta receptor signaling pathway"/>
    <property type="evidence" value="ECO:0007669"/>
    <property type="project" value="Ensembl"/>
</dbReference>
<dbReference type="GO" id="GO:0090263">
    <property type="term" value="P:positive regulation of canonical Wnt signaling pathway"/>
    <property type="evidence" value="ECO:0007669"/>
    <property type="project" value="Ensembl"/>
</dbReference>
<dbReference type="GO" id="GO:0008284">
    <property type="term" value="P:positive regulation of cell population proliferation"/>
    <property type="evidence" value="ECO:0007669"/>
    <property type="project" value="Ensembl"/>
</dbReference>
<dbReference type="GO" id="GO:0045893">
    <property type="term" value="P:positive regulation of DNA-templated transcription"/>
    <property type="evidence" value="ECO:0007669"/>
    <property type="project" value="Ensembl"/>
</dbReference>
<dbReference type="GO" id="GO:0010718">
    <property type="term" value="P:positive regulation of epithelial to mesenchymal transition"/>
    <property type="evidence" value="ECO:0007669"/>
    <property type="project" value="Ensembl"/>
</dbReference>
<dbReference type="GO" id="GO:0008360">
    <property type="term" value="P:regulation of cell shape"/>
    <property type="evidence" value="ECO:0007669"/>
    <property type="project" value="Ensembl"/>
</dbReference>
<dbReference type="GO" id="GO:0007179">
    <property type="term" value="P:transforming growth factor beta receptor signaling pathway"/>
    <property type="evidence" value="ECO:0007669"/>
    <property type="project" value="TreeGrafter"/>
</dbReference>
<dbReference type="CDD" id="cd23576">
    <property type="entry name" value="TFP_LU_ECD_BAMBI"/>
    <property type="match status" value="1"/>
</dbReference>
<dbReference type="FunFam" id="2.10.60.10:FF:000018">
    <property type="entry name" value="BMP and activin membrane-bound inhibitor homolog"/>
    <property type="match status" value="1"/>
</dbReference>
<dbReference type="Gene3D" id="2.10.60.10">
    <property type="entry name" value="CD59"/>
    <property type="match status" value="1"/>
</dbReference>
<dbReference type="InterPro" id="IPR009345">
    <property type="entry name" value="BAMBI"/>
</dbReference>
<dbReference type="InterPro" id="IPR045806">
    <property type="entry name" value="BAMBI_C"/>
</dbReference>
<dbReference type="InterPro" id="IPR045807">
    <property type="entry name" value="BAMBI_N"/>
</dbReference>
<dbReference type="InterPro" id="IPR045860">
    <property type="entry name" value="Snake_toxin-like_sf"/>
</dbReference>
<dbReference type="PANTHER" id="PTHR15505:SF1">
    <property type="entry name" value="BMP AND ACTIVIN MEMBRANE-BOUND INHIBITOR HOMOLOG"/>
    <property type="match status" value="1"/>
</dbReference>
<dbReference type="PANTHER" id="PTHR15505">
    <property type="entry name" value="RIIA DOMAIN-CONTAINING PROTEIN 1"/>
    <property type="match status" value="1"/>
</dbReference>
<dbReference type="Pfam" id="PF06211">
    <property type="entry name" value="BAMBI"/>
    <property type="match status" value="1"/>
</dbReference>
<dbReference type="Pfam" id="PF19337">
    <property type="entry name" value="BAMBI_C"/>
    <property type="match status" value="1"/>
</dbReference>
<dbReference type="PIRSF" id="PIRSF037456">
    <property type="entry name" value="BAMBI"/>
    <property type="match status" value="1"/>
</dbReference>
<dbReference type="SUPFAM" id="SSF57302">
    <property type="entry name" value="Snake toxin-like"/>
    <property type="match status" value="1"/>
</dbReference>
<gene>
    <name type="primary">BAMBI</name>
</gene>
<proteinExistence type="evidence at transcript level"/>
<evidence type="ECO:0000250" key="1"/>
<evidence type="ECO:0000255" key="2"/>
<evidence type="ECO:0000305" key="3"/>
<reference key="1">
    <citation type="submission" date="2002-09" db="EMBL/GenBank/DDBJ databases">
        <title>BMP antagonist expression in the sheep ovary.</title>
        <authorList>
            <person name="Souza C.J.H."/>
            <person name="McNeilly A.S."/>
            <person name="Baird D.T."/>
        </authorList>
    </citation>
    <scope>NUCLEOTIDE SEQUENCE [MRNA]</scope>
</reference>
<organism>
    <name type="scientific">Ovis aries</name>
    <name type="common">Sheep</name>
    <dbReference type="NCBI Taxonomy" id="9940"/>
    <lineage>
        <taxon>Eukaryota</taxon>
        <taxon>Metazoa</taxon>
        <taxon>Chordata</taxon>
        <taxon>Craniata</taxon>
        <taxon>Vertebrata</taxon>
        <taxon>Euteleostomi</taxon>
        <taxon>Mammalia</taxon>
        <taxon>Eutheria</taxon>
        <taxon>Laurasiatheria</taxon>
        <taxon>Artiodactyla</taxon>
        <taxon>Ruminantia</taxon>
        <taxon>Pecora</taxon>
        <taxon>Bovidae</taxon>
        <taxon>Caprinae</taxon>
        <taxon>Ovis</taxon>
    </lineage>
</organism>
<name>BAMBI_SHEEP</name>
<protein>
    <recommendedName>
        <fullName>BMP and activin membrane-bound inhibitor homolog</fullName>
    </recommendedName>
</protein>
<sequence length="260" mass="29116">MDRHSSYIFVWLQLELCAMAVLLTKGEIRCYCDAAHCVATGYMCKSELSACFSRLLDPQNTNSPLTHGCLDSLASTADICQARQARNHSGSPLPSLECCHEDMCNYRGLQDVLTPPKGEASGQGNRYQHDGSRNLITKVQELTSSKELWFRAAVIAVPIAGGLILVLLIMLALRMLRSENKRLQEQRQQMLSRLHYSFHGHHSKKGQVAKLDLECMVPVSGHENCCLTCDKMRQADLSHDRILSLVHWGMYSGHGKLEFV</sequence>
<accession>Q8HYZ0</accession>
<comment type="function">
    <text evidence="1">Negatively regulates TGF-beta signaling.</text>
</comment>
<comment type="subcellular location">
    <subcellularLocation>
        <location evidence="3">Membrane</location>
        <topology evidence="3">Single-pass type I membrane protein</topology>
    </subcellularLocation>
</comment>
<comment type="similarity">
    <text evidence="3">Belongs to the BAMBI family.</text>
</comment>
<keyword id="KW-0325">Glycoprotein</keyword>
<keyword id="KW-0472">Membrane</keyword>
<keyword id="KW-1185">Reference proteome</keyword>
<keyword id="KW-0732">Signal</keyword>
<keyword id="KW-0812">Transmembrane</keyword>
<keyword id="KW-1133">Transmembrane helix</keyword>
<feature type="signal peptide" evidence="2">
    <location>
        <begin position="1"/>
        <end position="26"/>
    </location>
</feature>
<feature type="chain" id="PRO_0000020782" description="BMP and activin membrane-bound inhibitor homolog">
    <location>
        <begin position="27"/>
        <end position="260"/>
    </location>
</feature>
<feature type="topological domain" description="Extracellular" evidence="2">
    <location>
        <begin position="27"/>
        <end position="152"/>
    </location>
</feature>
<feature type="transmembrane region" description="Helical" evidence="2">
    <location>
        <begin position="153"/>
        <end position="173"/>
    </location>
</feature>
<feature type="topological domain" description="Cytoplasmic" evidence="2">
    <location>
        <begin position="174"/>
        <end position="260"/>
    </location>
</feature>
<feature type="glycosylation site" description="N-linked (GlcNAc...) asparagine" evidence="2">
    <location>
        <position position="87"/>
    </location>
</feature>